<proteinExistence type="evidence at protein level"/>
<dbReference type="EMBL" id="AJ507735">
    <property type="protein sequence ID" value="CAD47811.1"/>
    <property type="molecule type" value="mRNA"/>
</dbReference>
<dbReference type="EMBL" id="BN000088">
    <property type="protein sequence ID" value="CAD92036.1"/>
    <property type="molecule type" value="mRNA"/>
</dbReference>
<dbReference type="EMBL" id="AY351979">
    <property type="protein sequence ID" value="AAQ55463.1"/>
    <property type="molecule type" value="Genomic_DNA"/>
</dbReference>
<dbReference type="EMBL" id="AY351960">
    <property type="protein sequence ID" value="AAQ55463.1"/>
    <property type="status" value="JOINED"/>
    <property type="molecule type" value="Genomic_DNA"/>
</dbReference>
<dbReference type="EMBL" id="AY351961">
    <property type="protein sequence ID" value="AAQ55463.1"/>
    <property type="status" value="JOINED"/>
    <property type="molecule type" value="Genomic_DNA"/>
</dbReference>
<dbReference type="EMBL" id="AY351962">
    <property type="protein sequence ID" value="AAQ55463.1"/>
    <property type="status" value="JOINED"/>
    <property type="molecule type" value="Genomic_DNA"/>
</dbReference>
<dbReference type="EMBL" id="AY351963">
    <property type="protein sequence ID" value="AAQ55463.1"/>
    <property type="status" value="JOINED"/>
    <property type="molecule type" value="Genomic_DNA"/>
</dbReference>
<dbReference type="EMBL" id="AY351964">
    <property type="protein sequence ID" value="AAQ55463.1"/>
    <property type="status" value="JOINED"/>
    <property type="molecule type" value="Genomic_DNA"/>
</dbReference>
<dbReference type="EMBL" id="AY351965">
    <property type="protein sequence ID" value="AAQ55463.1"/>
    <property type="status" value="JOINED"/>
    <property type="molecule type" value="Genomic_DNA"/>
</dbReference>
<dbReference type="EMBL" id="AY351966">
    <property type="protein sequence ID" value="AAQ55463.1"/>
    <property type="status" value="JOINED"/>
    <property type="molecule type" value="Genomic_DNA"/>
</dbReference>
<dbReference type="EMBL" id="AY351967">
    <property type="protein sequence ID" value="AAQ55463.1"/>
    <property type="status" value="JOINED"/>
    <property type="molecule type" value="Genomic_DNA"/>
</dbReference>
<dbReference type="EMBL" id="AY351968">
    <property type="protein sequence ID" value="AAQ55463.1"/>
    <property type="status" value="JOINED"/>
    <property type="molecule type" value="Genomic_DNA"/>
</dbReference>
<dbReference type="EMBL" id="AY351969">
    <property type="protein sequence ID" value="AAQ55463.1"/>
    <property type="status" value="JOINED"/>
    <property type="molecule type" value="Genomic_DNA"/>
</dbReference>
<dbReference type="EMBL" id="AY351970">
    <property type="protein sequence ID" value="AAQ55463.1"/>
    <property type="status" value="JOINED"/>
    <property type="molecule type" value="Genomic_DNA"/>
</dbReference>
<dbReference type="EMBL" id="AY351971">
    <property type="protein sequence ID" value="AAQ55463.1"/>
    <property type="status" value="JOINED"/>
    <property type="molecule type" value="Genomic_DNA"/>
</dbReference>
<dbReference type="EMBL" id="AY351972">
    <property type="protein sequence ID" value="AAQ55463.1"/>
    <property type="status" value="JOINED"/>
    <property type="molecule type" value="Genomic_DNA"/>
</dbReference>
<dbReference type="EMBL" id="AY351973">
    <property type="protein sequence ID" value="AAQ55463.1"/>
    <property type="status" value="JOINED"/>
    <property type="molecule type" value="Genomic_DNA"/>
</dbReference>
<dbReference type="EMBL" id="AY351974">
    <property type="protein sequence ID" value="AAQ55463.1"/>
    <property type="status" value="JOINED"/>
    <property type="molecule type" value="Genomic_DNA"/>
</dbReference>
<dbReference type="EMBL" id="AY351975">
    <property type="protein sequence ID" value="AAQ55463.1"/>
    <property type="status" value="JOINED"/>
    <property type="molecule type" value="Genomic_DNA"/>
</dbReference>
<dbReference type="EMBL" id="AY351976">
    <property type="protein sequence ID" value="AAQ55463.1"/>
    <property type="status" value="JOINED"/>
    <property type="molecule type" value="Genomic_DNA"/>
</dbReference>
<dbReference type="EMBL" id="AY351977">
    <property type="protein sequence ID" value="AAQ55463.1"/>
    <property type="status" value="JOINED"/>
    <property type="molecule type" value="Genomic_DNA"/>
</dbReference>
<dbReference type="EMBL" id="AY351978">
    <property type="protein sequence ID" value="AAQ55463.1"/>
    <property type="status" value="JOINED"/>
    <property type="molecule type" value="Genomic_DNA"/>
</dbReference>
<dbReference type="EMBL" id="AB018333">
    <property type="protein sequence ID" value="BAA34510.1"/>
    <property type="status" value="ALT_INIT"/>
    <property type="molecule type" value="mRNA"/>
</dbReference>
<dbReference type="EMBL" id="AL513164">
    <property type="status" value="NOT_ANNOTATED_CDS"/>
    <property type="molecule type" value="Genomic_DNA"/>
</dbReference>
<dbReference type="EMBL" id="AL033378">
    <property type="status" value="NOT_ANNOTATED_CDS"/>
    <property type="molecule type" value="Genomic_DNA"/>
</dbReference>
<dbReference type="EMBL" id="AK024403">
    <property type="protein sequence ID" value="BAB14909.1"/>
    <property type="status" value="ALT_INIT"/>
    <property type="molecule type" value="mRNA"/>
</dbReference>
<dbReference type="EMBL" id="CH471051">
    <property type="protein sequence ID" value="EAW47815.1"/>
    <property type="molecule type" value="Genomic_DNA"/>
</dbReference>
<dbReference type="EMBL" id="BC028303">
    <property type="protein sequence ID" value="AAH28303.1"/>
    <property type="molecule type" value="mRNA"/>
</dbReference>
<dbReference type="CCDS" id="CCDS5212.1"/>
<dbReference type="RefSeq" id="NP_056093.3">
    <property type="nucleotide sequence ID" value="NM_015278.4"/>
</dbReference>
<dbReference type="PDB" id="2DL0">
    <property type="method" value="NMR"/>
    <property type="chains" value="A=1164-1247"/>
</dbReference>
<dbReference type="PDB" id="2EBP">
    <property type="method" value="NMR"/>
    <property type="chains" value="A=555-614"/>
</dbReference>
<dbReference type="PDBsum" id="2DL0"/>
<dbReference type="PDBsum" id="2EBP"/>
<dbReference type="SMR" id="O94885"/>
<dbReference type="BioGRID" id="116916">
    <property type="interactions" value="58"/>
</dbReference>
<dbReference type="FunCoup" id="O94885">
    <property type="interactions" value="144"/>
</dbReference>
<dbReference type="IntAct" id="O94885">
    <property type="interactions" value="21"/>
</dbReference>
<dbReference type="MINT" id="O94885"/>
<dbReference type="STRING" id="9606.ENSP00000356437"/>
<dbReference type="GlyGen" id="O94885">
    <property type="glycosylation" value="1 site, 1 O-linked glycan (1 site)"/>
</dbReference>
<dbReference type="iPTMnet" id="O94885"/>
<dbReference type="PhosphoSitePlus" id="O94885"/>
<dbReference type="BioMuta" id="SASH1"/>
<dbReference type="jPOST" id="O94885"/>
<dbReference type="MassIVE" id="O94885"/>
<dbReference type="PaxDb" id="9606-ENSP00000356437"/>
<dbReference type="PeptideAtlas" id="O94885"/>
<dbReference type="ProteomicsDB" id="50522"/>
<dbReference type="Pumba" id="O94885"/>
<dbReference type="Antibodypedia" id="33257">
    <property type="antibodies" value="228 antibodies from 23 providers"/>
</dbReference>
<dbReference type="DNASU" id="23328"/>
<dbReference type="Ensembl" id="ENST00000367467.8">
    <property type="protein sequence ID" value="ENSP00000356437.3"/>
    <property type="gene ID" value="ENSG00000111961.19"/>
</dbReference>
<dbReference type="GeneID" id="23328"/>
<dbReference type="KEGG" id="hsa:23328"/>
<dbReference type="MANE-Select" id="ENST00000367467.8">
    <property type="protein sequence ID" value="ENSP00000356437.3"/>
    <property type="RefSeq nucleotide sequence ID" value="NM_015278.5"/>
    <property type="RefSeq protein sequence ID" value="NP_056093.3"/>
</dbReference>
<dbReference type="UCSC" id="uc003qme.2">
    <property type="organism name" value="human"/>
</dbReference>
<dbReference type="AGR" id="HGNC:19182"/>
<dbReference type="CTD" id="23328"/>
<dbReference type="DisGeNET" id="23328"/>
<dbReference type="GeneCards" id="SASH1"/>
<dbReference type="HGNC" id="HGNC:19182">
    <property type="gene designation" value="SASH1"/>
</dbReference>
<dbReference type="HPA" id="ENSG00000111961">
    <property type="expression patterns" value="Low tissue specificity"/>
</dbReference>
<dbReference type="MalaCards" id="SASH1"/>
<dbReference type="MIM" id="127500">
    <property type="type" value="phenotype"/>
</dbReference>
<dbReference type="MIM" id="607955">
    <property type="type" value="gene"/>
</dbReference>
<dbReference type="MIM" id="618373">
    <property type="type" value="phenotype"/>
</dbReference>
<dbReference type="neXtProt" id="NX_O94885"/>
<dbReference type="OpenTargets" id="ENSG00000111961"/>
<dbReference type="Orphanet" id="231040">
    <property type="disease" value="Familial generalized lentiginosis"/>
</dbReference>
<dbReference type="Orphanet" id="447961">
    <property type="disease" value="Pigmentation defects-palmoplantar keratoderma-skin carcinoma syndrome"/>
</dbReference>
<dbReference type="PharmGKB" id="PA134984521"/>
<dbReference type="VEuPathDB" id="HostDB:ENSG00000111961"/>
<dbReference type="eggNOG" id="KOG4384">
    <property type="taxonomic scope" value="Eukaryota"/>
</dbReference>
<dbReference type="GeneTree" id="ENSGT00940000156778"/>
<dbReference type="HOGENOM" id="CLU_281404_0_0_1"/>
<dbReference type="InParanoid" id="O94885"/>
<dbReference type="OMA" id="SMSDWLI"/>
<dbReference type="OrthoDB" id="10047268at2759"/>
<dbReference type="PAN-GO" id="O94885">
    <property type="GO annotations" value="3 GO annotations based on evolutionary models"/>
</dbReference>
<dbReference type="PhylomeDB" id="O94885"/>
<dbReference type="TreeFam" id="TF350709"/>
<dbReference type="PathwayCommons" id="O94885"/>
<dbReference type="SignaLink" id="O94885"/>
<dbReference type="BioGRID-ORCS" id="23328">
    <property type="hits" value="8 hits in 1155 CRISPR screens"/>
</dbReference>
<dbReference type="ChiTaRS" id="SASH1">
    <property type="organism name" value="human"/>
</dbReference>
<dbReference type="EvolutionaryTrace" id="O94885"/>
<dbReference type="GeneWiki" id="SASH1"/>
<dbReference type="GenomeRNAi" id="23328"/>
<dbReference type="Pharos" id="O94885">
    <property type="development level" value="Tbio"/>
</dbReference>
<dbReference type="PRO" id="PR:O94885"/>
<dbReference type="Proteomes" id="UP000005640">
    <property type="component" value="Chromosome 6"/>
</dbReference>
<dbReference type="RNAct" id="O94885">
    <property type="molecule type" value="protein"/>
</dbReference>
<dbReference type="Bgee" id="ENSG00000111961">
    <property type="expression patterns" value="Expressed in synovial joint and 215 other cell types or tissues"/>
</dbReference>
<dbReference type="ExpressionAtlas" id="O94885">
    <property type="expression patterns" value="baseline and differential"/>
</dbReference>
<dbReference type="GO" id="GO:0005737">
    <property type="term" value="C:cytoplasm"/>
    <property type="evidence" value="ECO:0000314"/>
    <property type="project" value="UniProtKB"/>
</dbReference>
<dbReference type="GO" id="GO:0005829">
    <property type="term" value="C:cytosol"/>
    <property type="evidence" value="ECO:0000314"/>
    <property type="project" value="HPA"/>
</dbReference>
<dbReference type="GO" id="GO:0005654">
    <property type="term" value="C:nucleoplasm"/>
    <property type="evidence" value="ECO:0000314"/>
    <property type="project" value="HPA"/>
</dbReference>
<dbReference type="GO" id="GO:0032991">
    <property type="term" value="C:protein-containing complex"/>
    <property type="evidence" value="ECO:0000315"/>
    <property type="project" value="MGI"/>
</dbReference>
<dbReference type="GO" id="GO:0001965">
    <property type="term" value="F:G-protein alpha-subunit binding"/>
    <property type="evidence" value="ECO:0000314"/>
    <property type="project" value="UniProtKB"/>
</dbReference>
<dbReference type="GO" id="GO:0031435">
    <property type="term" value="F:mitogen-activated protein kinase kinase kinase binding"/>
    <property type="evidence" value="ECO:0000314"/>
    <property type="project" value="MGI"/>
</dbReference>
<dbReference type="GO" id="GO:0060090">
    <property type="term" value="F:molecular adaptor activity"/>
    <property type="evidence" value="ECO:0000314"/>
    <property type="project" value="MGI"/>
</dbReference>
<dbReference type="GO" id="GO:0019901">
    <property type="term" value="F:protein kinase binding"/>
    <property type="evidence" value="ECO:0000314"/>
    <property type="project" value="MGI"/>
</dbReference>
<dbReference type="GO" id="GO:0045766">
    <property type="term" value="P:positive regulation of angiogenesis"/>
    <property type="evidence" value="ECO:0000315"/>
    <property type="project" value="MGI"/>
</dbReference>
<dbReference type="GO" id="GO:0010595">
    <property type="term" value="P:positive regulation of endothelial cell migration"/>
    <property type="evidence" value="ECO:0000314"/>
    <property type="project" value="MGI"/>
</dbReference>
<dbReference type="GO" id="GO:0043507">
    <property type="term" value="P:positive regulation of JUN kinase activity"/>
    <property type="evidence" value="ECO:0000315"/>
    <property type="project" value="MGI"/>
</dbReference>
<dbReference type="GO" id="GO:0031666">
    <property type="term" value="P:positive regulation of lipopolysaccharide-mediated signaling pathway"/>
    <property type="evidence" value="ECO:0000315"/>
    <property type="project" value="MGI"/>
</dbReference>
<dbReference type="GO" id="GO:1901224">
    <property type="term" value="P:positive regulation of non-canonical NF-kappaB signal transduction"/>
    <property type="evidence" value="ECO:0000315"/>
    <property type="project" value="MGI"/>
</dbReference>
<dbReference type="GO" id="GO:1900745">
    <property type="term" value="P:positive regulation of p38MAPK cascade"/>
    <property type="evidence" value="ECO:0000315"/>
    <property type="project" value="MGI"/>
</dbReference>
<dbReference type="GO" id="GO:0000209">
    <property type="term" value="P:protein polyubiquitination"/>
    <property type="evidence" value="ECO:0000314"/>
    <property type="project" value="MGI"/>
</dbReference>
<dbReference type="GO" id="GO:0010632">
    <property type="term" value="P:regulation of epithelial cell migration"/>
    <property type="evidence" value="ECO:0000315"/>
    <property type="project" value="UniProtKB"/>
</dbReference>
<dbReference type="GO" id="GO:1902498">
    <property type="term" value="P:regulation of protein autoubiquitination"/>
    <property type="evidence" value="ECO:0000314"/>
    <property type="project" value="MGI"/>
</dbReference>
<dbReference type="GO" id="GO:1900044">
    <property type="term" value="P:regulation of protein K63-linked ubiquitination"/>
    <property type="evidence" value="ECO:0000314"/>
    <property type="project" value="MGI"/>
</dbReference>
<dbReference type="CDD" id="cd09559">
    <property type="entry name" value="SAM_SASH1_repeat1"/>
    <property type="match status" value="1"/>
</dbReference>
<dbReference type="CDD" id="cd09492">
    <property type="entry name" value="SAM_SASH1_repeat2"/>
    <property type="match status" value="1"/>
</dbReference>
<dbReference type="CDD" id="cd11967">
    <property type="entry name" value="SH3_SASH1"/>
    <property type="match status" value="1"/>
</dbReference>
<dbReference type="FunFam" id="1.10.150.50:FF:000024">
    <property type="entry name" value="Putative sam and sh3 domain-containing protein 1"/>
    <property type="match status" value="1"/>
</dbReference>
<dbReference type="FunFam" id="1.10.150.50:FF:000038">
    <property type="entry name" value="Putative sam and sh3 domain-containing protein 1"/>
    <property type="match status" value="1"/>
</dbReference>
<dbReference type="FunFam" id="2.30.30.40:FF:000021">
    <property type="entry name" value="Putative sam and sh3 domain-containing protein 1"/>
    <property type="match status" value="1"/>
</dbReference>
<dbReference type="Gene3D" id="2.30.30.40">
    <property type="entry name" value="SH3 Domains"/>
    <property type="match status" value="1"/>
</dbReference>
<dbReference type="Gene3D" id="1.10.150.50">
    <property type="entry name" value="Transcription Factor, Ets-1"/>
    <property type="match status" value="2"/>
</dbReference>
<dbReference type="InterPro" id="IPR001660">
    <property type="entry name" value="SAM"/>
</dbReference>
<dbReference type="InterPro" id="IPR051725">
    <property type="entry name" value="SAM-SH3_domain_protein"/>
</dbReference>
<dbReference type="InterPro" id="IPR013761">
    <property type="entry name" value="SAM/pointed_sf"/>
</dbReference>
<dbReference type="InterPro" id="IPR037627">
    <property type="entry name" value="SASH1_SAM_repeat1"/>
</dbReference>
<dbReference type="InterPro" id="IPR037630">
    <property type="entry name" value="SASH1_SAM_repeat2"/>
</dbReference>
<dbReference type="InterPro" id="IPR035720">
    <property type="entry name" value="SASH1_SH3"/>
</dbReference>
<dbReference type="InterPro" id="IPR036028">
    <property type="entry name" value="SH3-like_dom_sf"/>
</dbReference>
<dbReference type="InterPro" id="IPR001452">
    <property type="entry name" value="SH3_domain"/>
</dbReference>
<dbReference type="InterPro" id="IPR021090">
    <property type="entry name" value="SPIDER"/>
</dbReference>
<dbReference type="PANTHER" id="PTHR12301:SF3">
    <property type="entry name" value="SAM AND SH3 DOMAIN-CONTAINING PROTEIN 1"/>
    <property type="match status" value="1"/>
</dbReference>
<dbReference type="PANTHER" id="PTHR12301">
    <property type="entry name" value="SAM-DOMAIN, SH3 AND NUCLEAR LOCALIZATION SIGNALS PROTEIN RELATED"/>
    <property type="match status" value="1"/>
</dbReference>
<dbReference type="Pfam" id="PF00536">
    <property type="entry name" value="SAM_1"/>
    <property type="match status" value="1"/>
</dbReference>
<dbReference type="Pfam" id="PF07647">
    <property type="entry name" value="SAM_2"/>
    <property type="match status" value="1"/>
</dbReference>
<dbReference type="Pfam" id="PF07653">
    <property type="entry name" value="SH3_2"/>
    <property type="match status" value="1"/>
</dbReference>
<dbReference type="Pfam" id="PF12485">
    <property type="entry name" value="SPIDER"/>
    <property type="match status" value="1"/>
</dbReference>
<dbReference type="SMART" id="SM00454">
    <property type="entry name" value="SAM"/>
    <property type="match status" value="2"/>
</dbReference>
<dbReference type="SMART" id="SM00326">
    <property type="entry name" value="SH3"/>
    <property type="match status" value="1"/>
</dbReference>
<dbReference type="SUPFAM" id="SSF47769">
    <property type="entry name" value="SAM/Pointed domain"/>
    <property type="match status" value="2"/>
</dbReference>
<dbReference type="SUPFAM" id="SSF50044">
    <property type="entry name" value="SH3-domain"/>
    <property type="match status" value="1"/>
</dbReference>
<dbReference type="PROSITE" id="PS50105">
    <property type="entry name" value="SAM_DOMAIN"/>
    <property type="match status" value="2"/>
</dbReference>
<dbReference type="PROSITE" id="PS50002">
    <property type="entry name" value="SH3"/>
    <property type="match status" value="1"/>
</dbReference>
<feature type="chain" id="PRO_0000097597" description="SAM and SH3 domain-containing protein 1">
    <location>
        <begin position="1"/>
        <end position="1247"/>
    </location>
</feature>
<feature type="domain" description="SH3" evidence="3">
    <location>
        <begin position="554"/>
        <end position="615"/>
    </location>
</feature>
<feature type="domain" description="SAM 1" evidence="2">
    <location>
        <begin position="633"/>
        <end position="697"/>
    </location>
</feature>
<feature type="domain" description="SAM 2" evidence="2">
    <location>
        <begin position="1177"/>
        <end position="1241"/>
    </location>
</feature>
<feature type="region of interest" description="Disordered" evidence="4">
    <location>
        <begin position="1"/>
        <end position="39"/>
    </location>
</feature>
<feature type="region of interest" description="Disordered" evidence="4">
    <location>
        <begin position="126"/>
        <end position="145"/>
    </location>
</feature>
<feature type="region of interest" description="Disordered" evidence="4">
    <location>
        <begin position="221"/>
        <end position="257"/>
    </location>
</feature>
<feature type="region of interest" description="Disordered" evidence="4">
    <location>
        <begin position="316"/>
        <end position="344"/>
    </location>
</feature>
<feature type="region of interest" description="Disordered" evidence="4">
    <location>
        <begin position="449"/>
        <end position="573"/>
    </location>
</feature>
<feature type="region of interest" description="Disordered" evidence="4">
    <location>
        <begin position="616"/>
        <end position="639"/>
    </location>
</feature>
<feature type="region of interest" description="Disordered" evidence="4">
    <location>
        <begin position="713"/>
        <end position="810"/>
    </location>
</feature>
<feature type="region of interest" description="Disordered" evidence="4">
    <location>
        <begin position="846"/>
        <end position="884"/>
    </location>
</feature>
<feature type="region of interest" description="Required for interaction with TRAF6" evidence="7">
    <location>
        <begin position="852"/>
        <end position="860"/>
    </location>
</feature>
<feature type="region of interest" description="Disordered" evidence="4">
    <location>
        <begin position="903"/>
        <end position="946"/>
    </location>
</feature>
<feature type="region of interest" description="Disordered" evidence="4">
    <location>
        <begin position="971"/>
        <end position="1065"/>
    </location>
</feature>
<feature type="compositionally biased region" description="Acidic residues" evidence="4">
    <location>
        <begin position="13"/>
        <end position="28"/>
    </location>
</feature>
<feature type="compositionally biased region" description="Low complexity" evidence="4">
    <location>
        <begin position="331"/>
        <end position="343"/>
    </location>
</feature>
<feature type="compositionally biased region" description="Low complexity" evidence="4">
    <location>
        <begin position="468"/>
        <end position="484"/>
    </location>
</feature>
<feature type="compositionally biased region" description="Low complexity" evidence="4">
    <location>
        <begin position="505"/>
        <end position="523"/>
    </location>
</feature>
<feature type="compositionally biased region" description="Polar residues" evidence="4">
    <location>
        <begin position="524"/>
        <end position="536"/>
    </location>
</feature>
<feature type="compositionally biased region" description="Basic residues" evidence="4">
    <location>
        <begin position="622"/>
        <end position="631"/>
    </location>
</feature>
<feature type="compositionally biased region" description="Polar residues" evidence="4">
    <location>
        <begin position="746"/>
        <end position="765"/>
    </location>
</feature>
<feature type="compositionally biased region" description="Pro residues" evidence="4">
    <location>
        <begin position="1050"/>
        <end position="1060"/>
    </location>
</feature>
<feature type="modified residue" description="Phosphoserine" evidence="17 18">
    <location>
        <position position="90"/>
    </location>
</feature>
<feature type="modified residue" description="Phosphoserine" evidence="1">
    <location>
        <position position="248"/>
    </location>
</feature>
<feature type="modified residue" description="Phosphoserine" evidence="19 20">
    <location>
        <position position="407"/>
    </location>
</feature>
<feature type="modified residue" description="Phosphoserine" evidence="20">
    <location>
        <position position="614"/>
    </location>
</feature>
<feature type="modified residue" description="Phosphoserine" evidence="1">
    <location>
        <position position="821"/>
    </location>
</feature>
<feature type="modified residue" description="Phosphoserine" evidence="1">
    <location>
        <position position="839"/>
    </location>
</feature>
<feature type="modified residue" description="Phosphothreonine" evidence="20">
    <location>
        <position position="858"/>
    </location>
</feature>
<feature type="sequence variant" id="VAR_031714" description="In dbSNP:rs35078400.">
    <original>P</original>
    <variation>Q</variation>
    <location>
        <position position="298"/>
    </location>
</feature>
<feature type="sequence variant" id="VAR_082102" description="In DUH1; dbSNP:rs1562489143." evidence="11">
    <original>S</original>
    <variation>A</variation>
    <location>
        <position position="507"/>
    </location>
</feature>
<feature type="sequence variant" id="VAR_082103" description="In DUH1; increased interaction with GNAS; increased interaction with IQGAP1; increased protein levels; increased protein stability; dbSNP:rs1562489156." evidence="6 12">
    <original>E</original>
    <variation>K</variation>
    <location>
        <position position="509"/>
    </location>
</feature>
<feature type="sequence variant" id="VAR_082104" description="In DUH1; uncertain significance; dbSNP:rs1237876014." evidence="10">
    <original>S</original>
    <variation>R</variation>
    <location>
        <position position="513"/>
    </location>
</feature>
<feature type="sequence variant" id="VAR_082105" description="In DUH1; affects the regulation of cell mobility resulting in increased melanocyte migration; increased interaction with GNAS; increased interaction with IQGAP1; increased protein levels; increased protein stability; dbSNP:rs1562489224." evidence="6 12">
    <original>L</original>
    <variation>P</variation>
    <location>
        <position position="515"/>
    </location>
</feature>
<feature type="sequence variant" id="VAR_082106" description="In DUH1; dbSNP:rs1562489240." evidence="9">
    <original>S</original>
    <variation>N</variation>
    <location>
        <position position="519"/>
    </location>
</feature>
<feature type="sequence variant" id="VAR_082107" description="In DUH1; affects the regulation of cell mobility resulting in increased melanocyte migration; increased interaction with GNAS; increased interaction with IQGAP1; increased protein levels; increased protein stability; dbSNP:rs1562490566." evidence="6 12">
    <original>Y</original>
    <variation>D</variation>
    <location>
        <position position="551"/>
    </location>
</feature>
<feature type="sequence variant" id="VAR_082108" description="In DUH1; dbSNP:rs1562490566." evidence="13">
    <original>Y</original>
    <variation>H</variation>
    <location>
        <position position="551"/>
    </location>
</feature>
<feature type="sequence variant" id="VAR_082109" description="In DUH1; uncertain significance; dbSNP:rs1562491501." evidence="13">
    <original>M</original>
    <variation>T</variation>
    <location>
        <position position="595"/>
    </location>
</feature>
<feature type="sequence variant" id="VAR_082110" description="In CAPOK; affects the regulation of cell mobility; patient fibroblasts migrate better than control fibroblasts; dbSNP:rs587781245." evidence="8">
    <original>E</original>
    <variation>K</variation>
    <location>
        <position position="617"/>
    </location>
</feature>
<feature type="sequence variant" id="VAR_031715" description="In dbSNP:rs208696." evidence="5 14 15">
    <original>Q</original>
    <variation>R</variation>
    <location>
        <position position="884"/>
    </location>
</feature>
<feature type="mutagenesis site" description="Abolishes interaction with TRAF6." evidence="7">
    <location>
        <begin position="852"/>
        <end position="860"/>
    </location>
</feature>
<feature type="sequence conflict" description="In Ref. 6; BAB14909." evidence="16" ref="6">
    <original>T</original>
    <variation>A</variation>
    <location>
        <position position="751"/>
    </location>
</feature>
<feature type="sequence conflict" description="In Ref. 6; BAB14909." evidence="16" ref="6">
    <original>H</original>
    <variation>R</variation>
    <location>
        <position position="1157"/>
    </location>
</feature>
<feature type="strand" evidence="21">
    <location>
        <begin position="556"/>
        <end position="561"/>
    </location>
</feature>
<feature type="strand" evidence="21">
    <location>
        <begin position="582"/>
        <end position="587"/>
    </location>
</feature>
<feature type="strand" evidence="21">
    <location>
        <begin position="590"/>
        <end position="592"/>
    </location>
</feature>
<feature type="strand" evidence="21">
    <location>
        <begin position="594"/>
        <end position="597"/>
    </location>
</feature>
<feature type="strand" evidence="21">
    <location>
        <begin position="602"/>
        <end position="605"/>
    </location>
</feature>
<feature type="strand" evidence="21">
    <location>
        <begin position="610"/>
        <end position="612"/>
    </location>
</feature>
<evidence type="ECO:0000250" key="1">
    <source>
        <dbReference type="UniProtKB" id="P59808"/>
    </source>
</evidence>
<evidence type="ECO:0000255" key="2">
    <source>
        <dbReference type="PROSITE-ProRule" id="PRU00184"/>
    </source>
</evidence>
<evidence type="ECO:0000255" key="3">
    <source>
        <dbReference type="PROSITE-ProRule" id="PRU00192"/>
    </source>
</evidence>
<evidence type="ECO:0000256" key="4">
    <source>
        <dbReference type="SAM" id="MobiDB-lite"/>
    </source>
</evidence>
<evidence type="ECO:0000269" key="5">
    <source>
    </source>
</evidence>
<evidence type="ECO:0000269" key="6">
    <source>
    </source>
</evidence>
<evidence type="ECO:0000269" key="7">
    <source>
    </source>
</evidence>
<evidence type="ECO:0000269" key="8">
    <source>
    </source>
</evidence>
<evidence type="ECO:0000269" key="9">
    <source>
    </source>
</evidence>
<evidence type="ECO:0000269" key="10">
    <source>
    </source>
</evidence>
<evidence type="ECO:0000269" key="11">
    <source>
    </source>
</evidence>
<evidence type="ECO:0000269" key="12">
    <source>
    </source>
</evidence>
<evidence type="ECO:0000269" key="13">
    <source>
    </source>
</evidence>
<evidence type="ECO:0000269" key="14">
    <source>
    </source>
</evidence>
<evidence type="ECO:0000269" key="15">
    <source ref="2"/>
</evidence>
<evidence type="ECO:0000305" key="16"/>
<evidence type="ECO:0007744" key="17">
    <source>
    </source>
</evidence>
<evidence type="ECO:0007744" key="18">
    <source>
    </source>
</evidence>
<evidence type="ECO:0007744" key="19">
    <source>
    </source>
</evidence>
<evidence type="ECO:0007744" key="20">
    <source>
    </source>
</evidence>
<evidence type="ECO:0007829" key="21">
    <source>
        <dbReference type="PDB" id="2EBP"/>
    </source>
</evidence>
<gene>
    <name type="primary">SASH1</name>
    <name type="synonym">KIAA0790</name>
    <name type="synonym">PEPE1</name>
</gene>
<keyword id="KW-0002">3D-structure</keyword>
<keyword id="KW-0963">Cytoplasm</keyword>
<keyword id="KW-0225">Disease variant</keyword>
<keyword id="KW-1063">Hypotrichosis</keyword>
<keyword id="KW-1007">Palmoplantar keratoderma</keyword>
<keyword id="KW-0597">Phosphoprotein</keyword>
<keyword id="KW-1267">Proteomics identification</keyword>
<keyword id="KW-1185">Reference proteome</keyword>
<keyword id="KW-0677">Repeat</keyword>
<keyword id="KW-0728">SH3 domain</keyword>
<keyword id="KW-0043">Tumor suppressor</keyword>
<protein>
    <recommendedName>
        <fullName>SAM and SH3 domain-containing protein 1</fullName>
    </recommendedName>
    <alternativeName>
        <fullName>Proline-glutamate repeat-containing protein</fullName>
    </alternativeName>
</protein>
<name>SASH1_HUMAN</name>
<organism>
    <name type="scientific">Homo sapiens</name>
    <name type="common">Human</name>
    <dbReference type="NCBI Taxonomy" id="9606"/>
    <lineage>
        <taxon>Eukaryota</taxon>
        <taxon>Metazoa</taxon>
        <taxon>Chordata</taxon>
        <taxon>Craniata</taxon>
        <taxon>Vertebrata</taxon>
        <taxon>Euteleostomi</taxon>
        <taxon>Mammalia</taxon>
        <taxon>Eutheria</taxon>
        <taxon>Euarchontoglires</taxon>
        <taxon>Primates</taxon>
        <taxon>Haplorrhini</taxon>
        <taxon>Catarrhini</taxon>
        <taxon>Hominidae</taxon>
        <taxon>Homo</taxon>
    </lineage>
</organism>
<comment type="function">
    <text evidence="6 7 8">Is a positive regulator of NF-kappa-B signaling downstream of TLR4 activation. It acts as a scaffold molecule to assemble a molecular complex that includes TRAF6, MAP3K7, CHUK and IKBKB, thereby facilitating NF-kappa-B signaling activation (PubMed:23776175). Regulates TRAF6 and MAP3K7 ubiquitination (PubMed:23776175). Involved in the regulation of cell mobility (PubMed:23333244, PubMed:23776175, PubMed:25315659). Regulates lipolysaccharide (LPS)-induced endothelial cell migration (PubMed:23776175). Is involved in the regulation of skin pigmentation through the control of melanocyte migration in the epidermis (PubMed:23333244).</text>
</comment>
<comment type="subunit">
    <text evidence="6 7">Interacts with GNAS (PubMed:23333244). Interacts with IQGAP1 (PubMed:23333244). Interacts with TRAF6 (via C-terminus); the interaction is LPS-dependent (PubMed:23776175). Interacts with MAP3K7, CHUK and IKBKB (PubMed:23776175).</text>
</comment>
<comment type="interaction">
    <interactant intactId="EBI-1761310">
        <id>O94885</id>
    </interactant>
    <interactant intactId="EBI-476295">
        <id>P31947</id>
        <label>SFN</label>
    </interactant>
    <organismsDiffer>false</organismsDiffer>
    <experiments>4</experiments>
</comment>
<comment type="subcellular location">
    <subcellularLocation>
        <location evidence="6">Cytoplasm</location>
    </subcellularLocation>
</comment>
<comment type="tissue specificity">
    <text evidence="5 6 9">Expressed ubiquitously, with highest levels in lung, placenta, spleen and thymus. Down-regulated in the majority (74%) of breast tumors in comparison with corresponding normal breast epithelial tissues. Expressed in the epidermis, epidermal keratinocytes, dermal fibroblasts and melanocytes (PubMed:23333244, PubMed:26203640).</text>
</comment>
<comment type="disease" evidence="6 9 10 11 12 13">
    <disease id="DI-05519">
        <name>Dyschromatosis universalis hereditaria 1</name>
        <acronym>DUH1</acronym>
        <description>A form of dyschromatosis universalis, an autosomal dominant pigmentary genodermatosis characterized by a mixture of hyperpigmented and hypopigmented macules distributed randomly over the body, that appear in infancy or early childhood. The trunk and extremities are the dominant sites of abnormal pigmentation. Facial lesions can be seen in 50% of affected individuals, but involvement of palms and soles is unusual. Abnormalities of hair and nails have also been reported. Dyschromatosis universalis hereditaria may be associated with abnormalities of dermal connective tissue, nerve tissue, or other systemic complications.</description>
        <dbReference type="MIM" id="127500"/>
    </disease>
    <text>The disease is caused by variants affecting the gene represented in this entry.</text>
</comment>
<comment type="disease" evidence="8">
    <disease id="DI-05518">
        <name>Cancer, alopecia, pigment dyscrasia, onychodystrophy, and keratoderma</name>
        <acronym>CAPOK</acronym>
        <description>An autosomal recessive genodermatosis characterized by hypo- and hyperpigmented macular skin lesions, progressive alopecia, palmoplantar keratoderma, dystrophic nails, teeth abnormalities and a predisposition to squamous cell carcinoma.</description>
        <dbReference type="MIM" id="618373"/>
    </disease>
    <text>The disease may be caused by variants affecting the gene represented in this entry.</text>
</comment>
<comment type="sequence caution" evidence="16">
    <conflict type="erroneous initiation">
        <sequence resource="EMBL-CDS" id="BAA34510"/>
    </conflict>
</comment>
<comment type="sequence caution" evidence="16">
    <conflict type="erroneous initiation">
        <sequence resource="EMBL-CDS" id="BAB14909"/>
    </conflict>
</comment>
<reference key="1">
    <citation type="journal article" date="2003" name="Oncogene">
        <title>SASH1 - a candidate tumour suppressor gene on chromosome 6q24.3 is downregulated in breast cancer.</title>
        <authorList>
            <person name="Zeller C."/>
            <person name="Hinzmann B."/>
            <person name="Seitz S."/>
            <person name="Prokoph H."/>
            <person name="Burkhardt-Goettges E."/>
            <person name="Fischer J."/>
            <person name="Jandrig B."/>
            <person name="Estevez-Schwarz L."/>
            <person name="Rosenthal A."/>
            <person name="Scherneck S."/>
        </authorList>
    </citation>
    <scope>NUCLEOTIDE SEQUENCE [MRNA]</scope>
    <scope>TISSUE SPECIFICITY</scope>
    <scope>VARIANT ARG-884</scope>
</reference>
<reference key="2">
    <citation type="submission" date="2003-07" db="EMBL/GenBank/DDBJ databases">
        <title>PEPE1 is a candidate tumor suppressor gene on chromosome 6q24.3 involved in melanoma and ovarian cancer.</title>
        <authorList>
            <person name="Rice A.J."/>
            <person name="Shpak M."/>
            <person name="Fountain J.W."/>
            <person name="Dubeau L."/>
        </authorList>
    </citation>
    <scope>NUCLEOTIDE SEQUENCE [GENOMIC DNA / MRNA]</scope>
    <scope>VARIANT ARG-884</scope>
</reference>
<reference key="3">
    <citation type="journal article" date="1998" name="DNA Res.">
        <title>Prediction of the coding sequences of unidentified human genes. XI. The complete sequences of 100 new cDNA clones from brain which code for large proteins in vitro.</title>
        <authorList>
            <person name="Nagase T."/>
            <person name="Ishikawa K."/>
            <person name="Suyama M."/>
            <person name="Kikuno R."/>
            <person name="Miyajima N."/>
            <person name="Tanaka A."/>
            <person name="Kotani H."/>
            <person name="Nomura N."/>
            <person name="Ohara O."/>
        </authorList>
    </citation>
    <scope>NUCLEOTIDE SEQUENCE [LARGE SCALE MRNA]</scope>
    <scope>VARIANT ARG-884</scope>
    <source>
        <tissue>Brain</tissue>
    </source>
</reference>
<reference key="4">
    <citation type="journal article" date="2003" name="Nature">
        <title>The DNA sequence and analysis of human chromosome 6.</title>
        <authorList>
            <person name="Mungall A.J."/>
            <person name="Palmer S.A."/>
            <person name="Sims S.K."/>
            <person name="Edwards C.A."/>
            <person name="Ashurst J.L."/>
            <person name="Wilming L."/>
            <person name="Jones M.C."/>
            <person name="Horton R."/>
            <person name="Hunt S.E."/>
            <person name="Scott C.E."/>
            <person name="Gilbert J.G.R."/>
            <person name="Clamp M.E."/>
            <person name="Bethel G."/>
            <person name="Milne S."/>
            <person name="Ainscough R."/>
            <person name="Almeida J.P."/>
            <person name="Ambrose K.D."/>
            <person name="Andrews T.D."/>
            <person name="Ashwell R.I.S."/>
            <person name="Babbage A.K."/>
            <person name="Bagguley C.L."/>
            <person name="Bailey J."/>
            <person name="Banerjee R."/>
            <person name="Barker D.J."/>
            <person name="Barlow K.F."/>
            <person name="Bates K."/>
            <person name="Beare D.M."/>
            <person name="Beasley H."/>
            <person name="Beasley O."/>
            <person name="Bird C.P."/>
            <person name="Blakey S.E."/>
            <person name="Bray-Allen S."/>
            <person name="Brook J."/>
            <person name="Brown A.J."/>
            <person name="Brown J.Y."/>
            <person name="Burford D.C."/>
            <person name="Burrill W."/>
            <person name="Burton J."/>
            <person name="Carder C."/>
            <person name="Carter N.P."/>
            <person name="Chapman J.C."/>
            <person name="Clark S.Y."/>
            <person name="Clark G."/>
            <person name="Clee C.M."/>
            <person name="Clegg S."/>
            <person name="Cobley V."/>
            <person name="Collier R.E."/>
            <person name="Collins J.E."/>
            <person name="Colman L.K."/>
            <person name="Corby N.R."/>
            <person name="Coville G.J."/>
            <person name="Culley K.M."/>
            <person name="Dhami P."/>
            <person name="Davies J."/>
            <person name="Dunn M."/>
            <person name="Earthrowl M.E."/>
            <person name="Ellington A.E."/>
            <person name="Evans K.A."/>
            <person name="Faulkner L."/>
            <person name="Francis M.D."/>
            <person name="Frankish A."/>
            <person name="Frankland J."/>
            <person name="French L."/>
            <person name="Garner P."/>
            <person name="Garnett J."/>
            <person name="Ghori M.J."/>
            <person name="Gilby L.M."/>
            <person name="Gillson C.J."/>
            <person name="Glithero R.J."/>
            <person name="Grafham D.V."/>
            <person name="Grant M."/>
            <person name="Gribble S."/>
            <person name="Griffiths C."/>
            <person name="Griffiths M.N.D."/>
            <person name="Hall R."/>
            <person name="Halls K.S."/>
            <person name="Hammond S."/>
            <person name="Harley J.L."/>
            <person name="Hart E.A."/>
            <person name="Heath P.D."/>
            <person name="Heathcott R."/>
            <person name="Holmes S.J."/>
            <person name="Howden P.J."/>
            <person name="Howe K.L."/>
            <person name="Howell G.R."/>
            <person name="Huckle E."/>
            <person name="Humphray S.J."/>
            <person name="Humphries M.D."/>
            <person name="Hunt A.R."/>
            <person name="Johnson C.M."/>
            <person name="Joy A.A."/>
            <person name="Kay M."/>
            <person name="Keenan S.J."/>
            <person name="Kimberley A.M."/>
            <person name="King A."/>
            <person name="Laird G.K."/>
            <person name="Langford C."/>
            <person name="Lawlor S."/>
            <person name="Leongamornlert D.A."/>
            <person name="Leversha M."/>
            <person name="Lloyd C.R."/>
            <person name="Lloyd D.M."/>
            <person name="Loveland J.E."/>
            <person name="Lovell J."/>
            <person name="Martin S."/>
            <person name="Mashreghi-Mohammadi M."/>
            <person name="Maslen G.L."/>
            <person name="Matthews L."/>
            <person name="McCann O.T."/>
            <person name="McLaren S.J."/>
            <person name="McLay K."/>
            <person name="McMurray A."/>
            <person name="Moore M.J.F."/>
            <person name="Mullikin J.C."/>
            <person name="Niblett D."/>
            <person name="Nickerson T."/>
            <person name="Novik K.L."/>
            <person name="Oliver K."/>
            <person name="Overton-Larty E.K."/>
            <person name="Parker A."/>
            <person name="Patel R."/>
            <person name="Pearce A.V."/>
            <person name="Peck A.I."/>
            <person name="Phillimore B.J.C.T."/>
            <person name="Phillips S."/>
            <person name="Plumb R.W."/>
            <person name="Porter K.M."/>
            <person name="Ramsey Y."/>
            <person name="Ranby S.A."/>
            <person name="Rice C.M."/>
            <person name="Ross M.T."/>
            <person name="Searle S.M."/>
            <person name="Sehra H.K."/>
            <person name="Sheridan E."/>
            <person name="Skuce C.D."/>
            <person name="Smith S."/>
            <person name="Smith M."/>
            <person name="Spraggon L."/>
            <person name="Squares S.L."/>
            <person name="Steward C.A."/>
            <person name="Sycamore N."/>
            <person name="Tamlyn-Hall G."/>
            <person name="Tester J."/>
            <person name="Theaker A.J."/>
            <person name="Thomas D.W."/>
            <person name="Thorpe A."/>
            <person name="Tracey A."/>
            <person name="Tromans A."/>
            <person name="Tubby B."/>
            <person name="Wall M."/>
            <person name="Wallis J.M."/>
            <person name="West A.P."/>
            <person name="White S.S."/>
            <person name="Whitehead S.L."/>
            <person name="Whittaker H."/>
            <person name="Wild A."/>
            <person name="Willey D.J."/>
            <person name="Wilmer T.E."/>
            <person name="Wood J.M."/>
            <person name="Wray P.W."/>
            <person name="Wyatt J.C."/>
            <person name="Young L."/>
            <person name="Younger R.M."/>
            <person name="Bentley D.R."/>
            <person name="Coulson A."/>
            <person name="Durbin R.M."/>
            <person name="Hubbard T."/>
            <person name="Sulston J.E."/>
            <person name="Dunham I."/>
            <person name="Rogers J."/>
            <person name="Beck S."/>
        </authorList>
    </citation>
    <scope>NUCLEOTIDE SEQUENCE [LARGE SCALE GENOMIC DNA]</scope>
</reference>
<reference key="5">
    <citation type="submission" date="2005-09" db="EMBL/GenBank/DDBJ databases">
        <authorList>
            <person name="Mural R.J."/>
            <person name="Istrail S."/>
            <person name="Sutton G.G."/>
            <person name="Florea L."/>
            <person name="Halpern A.L."/>
            <person name="Mobarry C.M."/>
            <person name="Lippert R."/>
            <person name="Walenz B."/>
            <person name="Shatkay H."/>
            <person name="Dew I."/>
            <person name="Miller J.R."/>
            <person name="Flanigan M.J."/>
            <person name="Edwards N.J."/>
            <person name="Bolanos R."/>
            <person name="Fasulo D."/>
            <person name="Halldorsson B.V."/>
            <person name="Hannenhalli S."/>
            <person name="Turner R."/>
            <person name="Yooseph S."/>
            <person name="Lu F."/>
            <person name="Nusskern D.R."/>
            <person name="Shue B.C."/>
            <person name="Zheng X.H."/>
            <person name="Zhong F."/>
            <person name="Delcher A.L."/>
            <person name="Huson D.H."/>
            <person name="Kravitz S.A."/>
            <person name="Mouchard L."/>
            <person name="Reinert K."/>
            <person name="Remington K.A."/>
            <person name="Clark A.G."/>
            <person name="Waterman M.S."/>
            <person name="Eichler E.E."/>
            <person name="Adams M.D."/>
            <person name="Hunkapiller M.W."/>
            <person name="Myers E.W."/>
            <person name="Venter J.C."/>
        </authorList>
    </citation>
    <scope>NUCLEOTIDE SEQUENCE [LARGE SCALE GENOMIC DNA]</scope>
</reference>
<reference key="6">
    <citation type="journal article" date="2004" name="Nat. Genet.">
        <title>Complete sequencing and characterization of 21,243 full-length human cDNAs.</title>
        <authorList>
            <person name="Ota T."/>
            <person name="Suzuki Y."/>
            <person name="Nishikawa T."/>
            <person name="Otsuki T."/>
            <person name="Sugiyama T."/>
            <person name="Irie R."/>
            <person name="Wakamatsu A."/>
            <person name="Hayashi K."/>
            <person name="Sato H."/>
            <person name="Nagai K."/>
            <person name="Kimura K."/>
            <person name="Makita H."/>
            <person name="Sekine M."/>
            <person name="Obayashi M."/>
            <person name="Nishi T."/>
            <person name="Shibahara T."/>
            <person name="Tanaka T."/>
            <person name="Ishii S."/>
            <person name="Yamamoto J."/>
            <person name="Saito K."/>
            <person name="Kawai Y."/>
            <person name="Isono Y."/>
            <person name="Nakamura Y."/>
            <person name="Nagahari K."/>
            <person name="Murakami K."/>
            <person name="Yasuda T."/>
            <person name="Iwayanagi T."/>
            <person name="Wagatsuma M."/>
            <person name="Shiratori A."/>
            <person name="Sudo H."/>
            <person name="Hosoiri T."/>
            <person name="Kaku Y."/>
            <person name="Kodaira H."/>
            <person name="Kondo H."/>
            <person name="Sugawara M."/>
            <person name="Takahashi M."/>
            <person name="Kanda K."/>
            <person name="Yokoi T."/>
            <person name="Furuya T."/>
            <person name="Kikkawa E."/>
            <person name="Omura Y."/>
            <person name="Abe K."/>
            <person name="Kamihara K."/>
            <person name="Katsuta N."/>
            <person name="Sato K."/>
            <person name="Tanikawa M."/>
            <person name="Yamazaki M."/>
            <person name="Ninomiya K."/>
            <person name="Ishibashi T."/>
            <person name="Yamashita H."/>
            <person name="Murakawa K."/>
            <person name="Fujimori K."/>
            <person name="Tanai H."/>
            <person name="Kimata M."/>
            <person name="Watanabe M."/>
            <person name="Hiraoka S."/>
            <person name="Chiba Y."/>
            <person name="Ishida S."/>
            <person name="Ono Y."/>
            <person name="Takiguchi S."/>
            <person name="Watanabe S."/>
            <person name="Yosida M."/>
            <person name="Hotuta T."/>
            <person name="Kusano J."/>
            <person name="Kanehori K."/>
            <person name="Takahashi-Fujii A."/>
            <person name="Hara H."/>
            <person name="Tanase T.-O."/>
            <person name="Nomura Y."/>
            <person name="Togiya S."/>
            <person name="Komai F."/>
            <person name="Hara R."/>
            <person name="Takeuchi K."/>
            <person name="Arita M."/>
            <person name="Imose N."/>
            <person name="Musashino K."/>
            <person name="Yuuki H."/>
            <person name="Oshima A."/>
            <person name="Sasaki N."/>
            <person name="Aotsuka S."/>
            <person name="Yoshikawa Y."/>
            <person name="Matsunawa H."/>
            <person name="Ichihara T."/>
            <person name="Shiohata N."/>
            <person name="Sano S."/>
            <person name="Moriya S."/>
            <person name="Momiyama H."/>
            <person name="Satoh N."/>
            <person name="Takami S."/>
            <person name="Terashima Y."/>
            <person name="Suzuki O."/>
            <person name="Nakagawa S."/>
            <person name="Senoh A."/>
            <person name="Mizoguchi H."/>
            <person name="Goto Y."/>
            <person name="Shimizu F."/>
            <person name="Wakebe H."/>
            <person name="Hishigaki H."/>
            <person name="Watanabe T."/>
            <person name="Sugiyama A."/>
            <person name="Takemoto M."/>
            <person name="Kawakami B."/>
            <person name="Yamazaki M."/>
            <person name="Watanabe K."/>
            <person name="Kumagai A."/>
            <person name="Itakura S."/>
            <person name="Fukuzumi Y."/>
            <person name="Fujimori Y."/>
            <person name="Komiyama M."/>
            <person name="Tashiro H."/>
            <person name="Tanigami A."/>
            <person name="Fujiwara T."/>
            <person name="Ono T."/>
            <person name="Yamada K."/>
            <person name="Fujii Y."/>
            <person name="Ozaki K."/>
            <person name="Hirao M."/>
            <person name="Ohmori Y."/>
            <person name="Kawabata A."/>
            <person name="Hikiji T."/>
            <person name="Kobatake N."/>
            <person name="Inagaki H."/>
            <person name="Ikema Y."/>
            <person name="Okamoto S."/>
            <person name="Okitani R."/>
            <person name="Kawakami T."/>
            <person name="Noguchi S."/>
            <person name="Itoh T."/>
            <person name="Shigeta K."/>
            <person name="Senba T."/>
            <person name="Matsumura K."/>
            <person name="Nakajima Y."/>
            <person name="Mizuno T."/>
            <person name="Morinaga M."/>
            <person name="Sasaki M."/>
            <person name="Togashi T."/>
            <person name="Oyama M."/>
            <person name="Hata H."/>
            <person name="Watanabe M."/>
            <person name="Komatsu T."/>
            <person name="Mizushima-Sugano J."/>
            <person name="Satoh T."/>
            <person name="Shirai Y."/>
            <person name="Takahashi Y."/>
            <person name="Nakagawa K."/>
            <person name="Okumura K."/>
            <person name="Nagase T."/>
            <person name="Nomura N."/>
            <person name="Kikuchi H."/>
            <person name="Masuho Y."/>
            <person name="Yamashita R."/>
            <person name="Nakai K."/>
            <person name="Yada T."/>
            <person name="Nakamura Y."/>
            <person name="Ohara O."/>
            <person name="Isogai T."/>
            <person name="Sugano S."/>
        </authorList>
    </citation>
    <scope>NUCLEOTIDE SEQUENCE [LARGE SCALE MRNA] OF 181-1247</scope>
    <source>
        <tissue>Thyroid</tissue>
    </source>
</reference>
<reference key="7">
    <citation type="journal article" date="2004" name="Genome Res.">
        <title>The status, quality, and expansion of the NIH full-length cDNA project: the Mammalian Gene Collection (MGC).</title>
        <authorList>
            <consortium name="The MGC Project Team"/>
        </authorList>
    </citation>
    <scope>NUCLEOTIDE SEQUENCE [LARGE SCALE MRNA] OF 1006-1247</scope>
    <source>
        <tissue>Placenta</tissue>
    </source>
</reference>
<reference key="8">
    <citation type="journal article" date="2006" name="Cell">
        <title>Global, in vivo, and site-specific phosphorylation dynamics in signaling networks.</title>
        <authorList>
            <person name="Olsen J.V."/>
            <person name="Blagoev B."/>
            <person name="Gnad F."/>
            <person name="Macek B."/>
            <person name="Kumar C."/>
            <person name="Mortensen P."/>
            <person name="Mann M."/>
        </authorList>
    </citation>
    <scope>PHOSPHORYLATION [LARGE SCALE ANALYSIS] AT SER-90</scope>
    <scope>IDENTIFICATION BY MASS SPECTROMETRY [LARGE SCALE ANALYSIS]</scope>
    <source>
        <tissue>Cervix carcinoma</tissue>
    </source>
</reference>
<reference key="9">
    <citation type="journal article" date="2008" name="Proc. Natl. Acad. Sci. U.S.A.">
        <title>A quantitative atlas of mitotic phosphorylation.</title>
        <authorList>
            <person name="Dephoure N."/>
            <person name="Zhou C."/>
            <person name="Villen J."/>
            <person name="Beausoleil S.A."/>
            <person name="Bakalarski C.E."/>
            <person name="Elledge S.J."/>
            <person name="Gygi S.P."/>
        </authorList>
    </citation>
    <scope>IDENTIFICATION BY MASS SPECTROMETRY [LARGE SCALE ANALYSIS]</scope>
    <source>
        <tissue>Cervix carcinoma</tissue>
    </source>
</reference>
<reference key="10">
    <citation type="journal article" date="2011" name="Sci. Signal.">
        <title>System-wide temporal characterization of the proteome and phosphoproteome of human embryonic stem cell differentiation.</title>
        <authorList>
            <person name="Rigbolt K.T."/>
            <person name="Prokhorova T.A."/>
            <person name="Akimov V."/>
            <person name="Henningsen J."/>
            <person name="Johansen P.T."/>
            <person name="Kratchmarova I."/>
            <person name="Kassem M."/>
            <person name="Mann M."/>
            <person name="Olsen J.V."/>
            <person name="Blagoev B."/>
        </authorList>
    </citation>
    <scope>PHOSPHORYLATION [LARGE SCALE ANALYSIS] AT SER-90</scope>
    <scope>IDENTIFICATION BY MASS SPECTROMETRY [LARGE SCALE ANALYSIS]</scope>
</reference>
<reference key="11">
    <citation type="journal article" date="2013" name="Cell. Signal.">
        <title>SASH1 regulates melanocyte transepithelial migration through a novel Galphas-SASH1-IQGAP1-E-cadherin dependent pathway.</title>
        <authorList>
            <person name="Zhou D."/>
            <person name="Wei Z."/>
            <person name="Deng S."/>
            <person name="Wang T."/>
            <person name="Zai M."/>
            <person name="Wang H."/>
            <person name="Guo L."/>
            <person name="Zhang J."/>
            <person name="Zhong H."/>
            <person name="He L."/>
            <person name="Xing Q."/>
        </authorList>
    </citation>
    <scope>FUNCTION</scope>
    <scope>INVOLVEMENT IN DUH1</scope>
    <scope>TISSUE SPECIFICITY</scope>
    <scope>SUBCELLULAR LOCATION</scope>
    <scope>INTERACTION WITH GNAS AND IQGAP1</scope>
    <scope>VARIANTS DUH1 LYS-509; PRO-515 AND ASP-551</scope>
    <scope>CHARACTERIZATION OF VARIANTS DUH1 LYS-509; PRO-515 AND ASP-551</scope>
</reference>
<reference key="12">
    <citation type="journal article" date="2013" name="J. Immunol.">
        <title>SASH1 is a scaffold molecule in endothelial TLR4 signaling.</title>
        <authorList>
            <person name="Dauphinee S.M."/>
            <person name="Clayton A."/>
            <person name="Hussainkhel A."/>
            <person name="Yang C."/>
            <person name="Park Y.J."/>
            <person name="Fuller M.E."/>
            <person name="Blonder J."/>
            <person name="Veenstra T.D."/>
            <person name="Karsan A."/>
        </authorList>
    </citation>
    <scope>FUNCTION</scope>
    <scope>INTERACTION WITH TRAF6; MAP3K7; CHUK AND IKBKB</scope>
    <scope>MUTAGENESIS OF 852-ASP--PRO-860</scope>
</reference>
<reference key="13">
    <citation type="journal article" date="2013" name="J. Proteome Res.">
        <title>Toward a comprehensive characterization of a human cancer cell phosphoproteome.</title>
        <authorList>
            <person name="Zhou H."/>
            <person name="Di Palma S."/>
            <person name="Preisinger C."/>
            <person name="Peng M."/>
            <person name="Polat A.N."/>
            <person name="Heck A.J."/>
            <person name="Mohammed S."/>
        </authorList>
    </citation>
    <scope>PHOSPHORYLATION [LARGE SCALE ANALYSIS] AT SER-407</scope>
    <scope>IDENTIFICATION BY MASS SPECTROMETRY [LARGE SCALE ANALYSIS]</scope>
    <source>
        <tissue>Cervix carcinoma</tissue>
        <tissue>Erythroleukemia</tissue>
    </source>
</reference>
<reference key="14">
    <citation type="journal article" date="2014" name="J. Proteomics">
        <title>An enzyme assisted RP-RPLC approach for in-depth analysis of human liver phosphoproteome.</title>
        <authorList>
            <person name="Bian Y."/>
            <person name="Song C."/>
            <person name="Cheng K."/>
            <person name="Dong M."/>
            <person name="Wang F."/>
            <person name="Huang J."/>
            <person name="Sun D."/>
            <person name="Wang L."/>
            <person name="Ye M."/>
            <person name="Zou H."/>
        </authorList>
    </citation>
    <scope>PHOSPHORYLATION [LARGE SCALE ANALYSIS] AT SER-407; SER-614 AND THR-858</scope>
    <scope>IDENTIFICATION BY MASS SPECTROMETRY [LARGE SCALE ANALYSIS]</scope>
    <source>
        <tissue>Liver</tissue>
    </source>
</reference>
<reference key="15">
    <citation type="journal article" date="2015" name="Eur. J. Hum. Genet.">
        <title>Autosomal-recessive SASH1 variants associated with a new genodermatosis with pigmentation defects, palmoplantar keratoderma and skin carcinoma.</title>
        <authorList>
            <person name="Courcet J.B."/>
            <person name="Elalaoui S.C."/>
            <person name="Duplomb L."/>
            <person name="Tajir M."/>
            <person name="Riviere J.B."/>
            <person name="Thevenon J."/>
            <person name="Gigot N."/>
            <person name="Marle N."/>
            <person name="Aral B."/>
            <person name="Duffourd Y."/>
            <person name="Sarasin A."/>
            <person name="Naim V."/>
            <person name="Courcet-Degrolard E."/>
            <person name="Aubriot-Lorton M.H."/>
            <person name="Martin L."/>
            <person name="Abrid J.E."/>
            <person name="Thauvin C."/>
            <person name="Sefiani A."/>
            <person name="Vabres P."/>
            <person name="Faivre L."/>
        </authorList>
    </citation>
    <scope>FUNCTION</scope>
    <scope>INVOLVEMENT IN CAPOK</scope>
    <scope>VARIANT CAPOK LYS-617</scope>
    <scope>CHARACTERIZATION OF VARIANT CAPOK LYS-617</scope>
</reference>
<reference key="16">
    <citation type="journal article" date="2015" name="J. Invest. Dermatol.">
        <title>SASH1 is involved in an autosomal dominant lentiginous phenotype.</title>
        <authorList>
            <person name="Shellman Y.G."/>
            <person name="Lambert K.A."/>
            <person name="Brauweiler A."/>
            <person name="Fain P."/>
            <person name="Spritz R.A."/>
            <person name="Martini M."/>
            <person name="Janssen K.P."/>
            <person name="Box N.F."/>
            <person name="Terzian T."/>
            <person name="Rewers M."/>
            <person name="Horvath A."/>
            <person name="Stratakis C.A."/>
            <person name="Robinson W.A."/>
            <person name="Robinson S.E."/>
            <person name="Norris D.A."/>
            <person name="Artinger K.B."/>
            <person name="Pacheco T.R."/>
        </authorList>
    </citation>
    <scope>TISSUE SPECIFICITY</scope>
    <scope>INVOLVEMENT IN DUH1</scope>
    <scope>VARIANT DUH1 ASN-519</scope>
</reference>
<reference key="17">
    <citation type="submission" date="2007-08" db="PDB data bank">
        <title>Solution structure of the SH3 and SAM-domains from human SAM and SH3 domain-containing protein 1.</title>
        <authorList>
            <consortium name="RIKEN structural genomics initiative (RSGI)"/>
        </authorList>
    </citation>
    <scope>STRUCTURE BY NMR OF 555-614 AND 1164-1247</scope>
</reference>
<reference key="18">
    <citation type="journal article" date="2016" name="Clin. Genet.">
        <title>Lentiginous phenotypes caused by diverse pathogenic genes (SASH1 and PTPN11): clinical and molecular discrimination.</title>
        <authorList>
            <person name="Zhang J."/>
            <person name="Cheng R."/>
            <person name="Liang J."/>
            <person name="Ni C."/>
            <person name="Li M."/>
            <person name="Yao Z."/>
        </authorList>
    </citation>
    <scope>VARIANT DUH1 ARG-513</scope>
</reference>
<reference key="19">
    <citation type="journal article" date="2017" name="Acta Derm. Venereol.">
        <title>A novel de novo mutation of the SASH1 gene in a chinese family with multiple lentigines.</title>
        <authorList>
            <person name="Wang J."/>
            <person name="Zhang J."/>
            <person name="Li X."/>
            <person name="Wang Z."/>
            <person name="Lei D."/>
            <person name="Wang G."/>
            <person name="Li J."/>
            <person name="Zhang S."/>
            <person name="Li Z."/>
            <person name="Li M."/>
        </authorList>
    </citation>
    <scope>VARIANT DUH1 ALA-507</scope>
</reference>
<reference key="20">
    <citation type="journal article" date="2017" name="J. Cell. Mol. Med.">
        <title>A novel P53/POMC/Galphas/SASH1 autoregulatory feedback loop activates mutated SASH1 to cause pathologic hyperpigmentation.</title>
        <authorList>
            <person name="Zhou D."/>
            <person name="Wei Z."/>
            <person name="Kuang Z."/>
            <person name="Luo H."/>
            <person name="Ma J."/>
            <person name="Zeng X."/>
            <person name="Wang K."/>
            <person name="Liu B."/>
            <person name="Gong F."/>
            <person name="Wang J."/>
            <person name="Lei S."/>
            <person name="Wang D."/>
            <person name="Zeng J."/>
            <person name="Wang T."/>
            <person name="He Y."/>
            <person name="Yuan Y."/>
            <person name="Dai H."/>
            <person name="He L."/>
            <person name="Xing Q."/>
        </authorList>
    </citation>
    <scope>VARIANTS DUH1 LYS-509; PRO-515 AND ASP-551</scope>
</reference>
<reference key="21">
    <citation type="journal article" date="2019" name="Indian J. Dermatol. Venereol. Leprol.">
        <title>Novel mutations in SASH1 associated with dyschromatosis universalis hereditaria.</title>
        <authorList>
            <person name="Zhong W.L."/>
            <person name="Wang H.J."/>
            <person name="Lin Z.M."/>
            <person name="Yang Y."/>
        </authorList>
    </citation>
    <scope>VARIANTS DUH1 HIS-551 AND THR-595</scope>
</reference>
<accession>O94885</accession>
<accession>Q5TGN5</accession>
<accession>Q8TAI0</accession>
<accession>Q9H7R7</accession>
<sequence length="1247" mass="136653">MEDAGAAGPGPEPEPEPEPEPEPAPEPEPEPKPGAGTSEAFSRLWTDVMGILDGSLGNIDDLAQQYADYYNTCFSDVCERMEELRKRRVSQDLEVEKPDASPTSLQLRSQIEESLGFCSAVSTPEVERKNPLHKSNSEDSSVGKGDWKKKNKYFWQNFRKNQKGIMRQTSKGEDVGYVASEITMSDEERIQLMMMVKEKMITIEEALARLKEYEAQHRQSAALDPADWPDGSYPTFDGSSNCNSREQSDDETEESVKFKRLHKLVNSTRRVRKKLIRVEEMKKPSTEGGEEHVFENSPVLDERSALYSGVHKKPLFFDGSPEKPPEDDSDSLTTSPSSSSLDTWGAGRKLVKTFSKGESRGLIKPPKKMGTFFSYPEEEKAQKVSRSLTEGEMKKGLGSLSHGRTCSFGGFDLTNRSLHVGSNNSDPMGKEGDFVYKEVIKSPTASRISLGKKVKSVKETMRKRMSKKYSSSVSEQDSGLDGMPGSPPPSQPDPEHLDKPKLKAGGSVESLRSSLSGQSSMSGQTVSTTDSSTSNRESVKSEDGDDEEPPYRGPFCGRARVHTDFTPSPYDTDSLKLKKGDIIDIISKPPMGTWMGLLNNKVGTFKFIYVDVLSEDEEKPKRPTRRRRKGRPPQPKSVEDLLDRINLKEHMPTFLFNGYEDLDTFKLLEEEDLDELNIRDPEHRAVLLTAVELLQEYDSNSDQSGSQEKLLVDSQGLSGCSPRDSGCYESSENLENGKTRKASLLSAKSSTEPSLKSFSRNQLGNYPTLPLMKSGDALKQGQEEGRLGGGLAPDTSKSCDPPGVTGLNKNRRSLPVSICRSCETLEGPQTVDTWPRSHSLDDLQVEPGAEQDVPTEVTEPPPQIVPEVPQKTTASSTKAQPLEQDSAVDNALLLTQSKRFSEPQKLTTKKLEGSIAASGRGLSPPQCLPRNYDAQPPGAKHGLARTPLEGHRKGHEFEGTHHPLGTKEGVDAEQRMQPKIPSQPPPVPAKKSRERLANGLHPVPMGPSGALPSPDAPCLPVKRGSPASPTSPSDCPPALAPRPLSGQAPGSPPSTRPPPWLSELPENTSLQEHGVKLGPALTRKVSCARGVDLETLTENKLHAEGIDLTEEPYSDKHGRCGIPEALVQRYAEDLDQPERDVAANMDQIRVKQLRKQHRMAIPSGGLTEICRKPVSPGCISSVSDWLISIGLPMYAGTLSTAGFSTLSQVPSLSHTCLQEAGITEERHIRKLLSAARLFKLPPGPEAM</sequence>